<evidence type="ECO:0000269" key="1">
    <source>
    </source>
</evidence>
<evidence type="ECO:0000269" key="2">
    <source>
    </source>
</evidence>
<evidence type="ECO:0000303" key="3">
    <source>
    </source>
</evidence>
<evidence type="ECO:0000305" key="4"/>
<evidence type="ECO:0000305" key="5">
    <source>
    </source>
</evidence>
<evidence type="ECO:0007744" key="6">
    <source>
        <dbReference type="PDB" id="7AE2"/>
    </source>
</evidence>
<evidence type="ECO:0007744" key="7">
    <source>
        <dbReference type="PDB" id="7AE6"/>
    </source>
</evidence>
<evidence type="ECO:0007744" key="8">
    <source>
        <dbReference type="PDB" id="7AE8"/>
    </source>
</evidence>
<evidence type="ECO:0007744" key="9">
    <source>
        <dbReference type="PDB" id="7AE9"/>
    </source>
</evidence>
<evidence type="ECO:0007829" key="10">
    <source>
        <dbReference type="PDB" id="7AE6"/>
    </source>
</evidence>
<organism>
    <name type="scientific">Aphanizomenon flos-aquae (strain 2012/KM1/D3)</name>
    <dbReference type="NCBI Taxonomy" id="1532906"/>
    <lineage>
        <taxon>Bacteria</taxon>
        <taxon>Bacillati</taxon>
        <taxon>Cyanobacteriota</taxon>
        <taxon>Cyanophyceae</taxon>
        <taxon>Nostocales</taxon>
        <taxon>Aphanizomenonaceae</taxon>
        <taxon>Aphanizomenon</taxon>
    </lineage>
</organism>
<accession>A0A0B0QJR1</accession>
<name>HEPT_APHF2</name>
<gene>
    <name evidence="3" type="primary">hepT</name>
    <name evidence="3" type="synonym">hepn</name>
    <name type="ORF">OA07_26455</name>
</gene>
<comment type="function">
    <text evidence="2">Toxic component of a type VII toxin-antitoxin (TA) system. Upon cloning in E.coli inhibits cell growth for several hours; eventually cells recover and start growing. Cleaves the last 4 nucleotides from the tRNA acceptor stem (shown in vitro with E.coli tRNA-Glu(UUC)); only cleaves intact tRNA. Has no activity on mRNA. Neutralized by coexpression with cognate antitoxin MntA, which is due to di-AMPylation of the RNase.</text>
</comment>
<comment type="catalytic activity">
    <reaction evidence="2">
        <text>(tRNA)-3'-end (ribonucleoside 5'-phosphate)-(guanosyl 5'-phosphate)-(cytosyl 5'-phosphate)-(cytosyl 5'-phosphate)-(adenosine 5'-phosphate) + H2O = GpCpCpA + tRNA 3'-end (ribonucleotide 3'-phosphate) + H(+)</text>
        <dbReference type="Rhea" id="RHEA:66608"/>
        <dbReference type="Rhea" id="RHEA-COMP:17075"/>
        <dbReference type="Rhea" id="RHEA-COMP:17076"/>
        <dbReference type="ChEBI" id="CHEBI:15377"/>
        <dbReference type="ChEBI" id="CHEBI:15378"/>
        <dbReference type="ChEBI" id="CHEBI:83062"/>
        <dbReference type="ChEBI" id="CHEBI:167197"/>
        <dbReference type="ChEBI" id="CHEBI:167198"/>
    </reaction>
</comment>
<comment type="subunit">
    <text evidence="2">Homodimer. Forms a complex with MntA, probably MntA(1):HepT(2) in vivo; can only be purified when both Arg-102 and Tyr-109 (or His-107 and Tyr-109) of this protein have been mutated. The fully di-AMPylated homodimer is not found in a complex with MntA.</text>
</comment>
<comment type="PTM">
    <text evidence="2">Di-AMPylated by cognate antitoxin MntA on Tyr-109 when both are expressed in E.coli; GMPylation occurs much less often. Leads to an increase of mass of 659 Da. Di-AMPylation moves the catalytic His-107 away from the catalytic center, leading to loss of nuclease activity and thus toxicity. Probably one subunit of the dimer is di-AMPylated, the complex dissociates and then reassociates to di-AMPylate the other HepT subunit.</text>
</comment>
<comment type="miscellaneous">
    <text evidence="1">Part of a locus that includes subtype I-D CRISPR-Cas genes.</text>
</comment>
<comment type="similarity">
    <text evidence="4">Belongs to the HepT RNase toxin family.</text>
</comment>
<comment type="sequence caution" evidence="2">
    <conflict type="erroneous initiation">
        <sequence resource="EMBL-CDS" id="KHG38990"/>
    </conflict>
    <text>Truncated N-terminus.</text>
</comment>
<sequence length="147" mass="17110">MTNIEPVIIETRLELIGRYLDHLKKFENISLDDYLSSFEQQLITERLLQLITQAAIDINDHILSKLKSGKSYTNFEAFIELGKYQILTPELAKQIAPSSGLRNRLVHEYDDIDPNQVFMAISFALQQYPLYVRQINSYLITLEEEND</sequence>
<dbReference type="EC" id="3.1.27.-" evidence="2"/>
<dbReference type="EMBL" id="JSDP01000312">
    <property type="protein sequence ID" value="KHG38990.1"/>
    <property type="status" value="ALT_INIT"/>
    <property type="molecule type" value="Genomic_DNA"/>
</dbReference>
<dbReference type="RefSeq" id="WP_052150109.1">
    <property type="nucleotide sequence ID" value="NZ_JSDP01000312.1"/>
</dbReference>
<dbReference type="PDB" id="7AE2">
    <property type="method" value="X-ray"/>
    <property type="resolution" value="2.00 A"/>
    <property type="chains" value="A=1-147"/>
</dbReference>
<dbReference type="PDB" id="7AE6">
    <property type="method" value="X-ray"/>
    <property type="resolution" value="1.65 A"/>
    <property type="chains" value="A/B=1-147"/>
</dbReference>
<dbReference type="PDB" id="7AE8">
    <property type="method" value="X-ray"/>
    <property type="resolution" value="2.00 A"/>
    <property type="chains" value="A/B/C/D=1-147"/>
</dbReference>
<dbReference type="PDB" id="7AE9">
    <property type="method" value="X-ray"/>
    <property type="resolution" value="2.90 A"/>
    <property type="chains" value="A/B/C/D=1-147"/>
</dbReference>
<dbReference type="PDBsum" id="7AE2"/>
<dbReference type="PDBsum" id="7AE6"/>
<dbReference type="PDBsum" id="7AE8"/>
<dbReference type="PDBsum" id="7AE9"/>
<dbReference type="SMR" id="A0A0B0QJR1"/>
<dbReference type="GO" id="GO:0110001">
    <property type="term" value="C:toxin-antitoxin complex"/>
    <property type="evidence" value="ECO:0007669"/>
    <property type="project" value="InterPro"/>
</dbReference>
<dbReference type="GO" id="GO:0004519">
    <property type="term" value="F:endonuclease activity"/>
    <property type="evidence" value="ECO:0007669"/>
    <property type="project" value="UniProtKB-KW"/>
</dbReference>
<dbReference type="GO" id="GO:0000166">
    <property type="term" value="F:nucleotide binding"/>
    <property type="evidence" value="ECO:0007669"/>
    <property type="project" value="UniProtKB-KW"/>
</dbReference>
<dbReference type="GO" id="GO:0004540">
    <property type="term" value="F:RNA nuclease activity"/>
    <property type="evidence" value="ECO:0007669"/>
    <property type="project" value="InterPro"/>
</dbReference>
<dbReference type="Gene3D" id="1.20.120.580">
    <property type="entry name" value="bsu32300-like"/>
    <property type="match status" value="1"/>
</dbReference>
<dbReference type="InterPro" id="IPR008201">
    <property type="entry name" value="HepT-like"/>
</dbReference>
<dbReference type="InterPro" id="IPR037038">
    <property type="entry name" value="HepT-like_sf"/>
</dbReference>
<dbReference type="InterPro" id="IPR052379">
    <property type="entry name" value="Type_VII_TA_RNase"/>
</dbReference>
<dbReference type="NCBIfam" id="NF047751">
    <property type="entry name" value="HepT_toxin"/>
    <property type="match status" value="1"/>
</dbReference>
<dbReference type="PANTHER" id="PTHR33397:SF3">
    <property type="entry name" value="MRNA NUCLEASE HEPT"/>
    <property type="match status" value="1"/>
</dbReference>
<dbReference type="PANTHER" id="PTHR33397">
    <property type="entry name" value="UPF0331 PROTEIN YUTE"/>
    <property type="match status" value="1"/>
</dbReference>
<dbReference type="Pfam" id="PF01934">
    <property type="entry name" value="HepT-like"/>
    <property type="match status" value="1"/>
</dbReference>
<reference key="1">
    <citation type="journal article" date="2015" name="Genome Announc.">
        <title>Draft Genome Sequence of the Cyanobacterium Aphanizomenon flos-aquae Strain 2012/KM1/D3, Isolated from the Curonian Lagoon (Baltic Sea).</title>
        <authorList>
            <person name="Sulcius S."/>
            <person name="Alzbutas G."/>
            <person name="Kvederaviciute K."/>
            <person name="Koreiviene J."/>
            <person name="Zakrys L."/>
            <person name="Lubys A."/>
            <person name="Paskauskas R."/>
        </authorList>
    </citation>
    <scope>NUCLEOTIDE SEQUENCE [LARGE SCALE GENOMIC DNA]</scope>
    <source>
        <strain>2012/KM1/D3</strain>
    </source>
</reference>
<reference evidence="6 7 8 9" key="2">
    <citation type="journal article" date="2020" name="Mol. Cell">
        <title>HEPN-MNT Toxin-Antitoxin System: The HEPN Ribonuclease Is Neutralized by OligoAMPylation.</title>
        <authorList>
            <person name="Songailiene I."/>
            <person name="Juozapaitis J."/>
            <person name="Tamulaitiene G."/>
            <person name="Ruksenaite A."/>
            <person name="Sulcius S."/>
            <person name="Sasnauskas G."/>
            <person name="Venclovas C."/>
            <person name="Siksnys V."/>
        </authorList>
    </citation>
    <scope>X-RAY CRYSTALLOGRAPHY (1.65 ANGSTROMS) ALONE AND IN COMPLEX WITH MNTA</scope>
    <scope>FUNCTION AS A TOXIN</scope>
    <scope>SUBUNIT</scope>
    <scope>POSSIBLE ACTIVE SITE</scope>
    <scope>DI-AMPYLATION AT TYR-109</scope>
    <scope>MUTAGENESIS OF ARG-12; ARG-46; 102-ARG--TYR-109; ARG-102 AND TYR-109</scope>
    <scope>SEQUENCE REVISION TO N-TERMINUS</scope>
    <source>
        <strain>2012/KM1/D3</strain>
    </source>
</reference>
<protein>
    <recommendedName>
        <fullName evidence="3">tRNA nuclease HepT</fullName>
        <ecNumber evidence="2">3.1.27.-</ecNumber>
    </recommendedName>
    <alternativeName>
        <fullName evidence="3">Toxin HEPN</fullName>
    </alternativeName>
    <alternativeName>
        <fullName evidence="3">tRNA nuclease HEPN</fullName>
    </alternativeName>
</protein>
<feature type="chain" id="PRO_0000452432" description="tRNA nuclease HepT">
    <location>
        <begin position="1"/>
        <end position="147"/>
    </location>
</feature>
<feature type="short sequence motif" description="RX(4)HXY motif" evidence="2">
    <location>
        <begin position="102"/>
        <end position="109"/>
    </location>
</feature>
<feature type="short sequence motif" description="Y-loop" evidence="2">
    <location>
        <begin position="107"/>
        <end position="113"/>
    </location>
</feature>
<feature type="active site" evidence="5">
    <location>
        <position position="102"/>
    </location>
</feature>
<feature type="active site" evidence="5">
    <location>
        <position position="107"/>
    </location>
</feature>
<feature type="modified residue" description="O-di-AMP-tyrosine" evidence="2 7">
    <location>
        <position position="109"/>
    </location>
</feature>
<feature type="mutagenesis site" description="Most protein is di-AMPylated, but a small amount is tri-AMPylated." evidence="2">
    <original>R</original>
    <variation>A</variation>
    <location>
        <position position="12"/>
    </location>
</feature>
<feature type="mutagenesis site" description="No longer dimerizes." evidence="2">
    <original>R</original>
    <variation>E</variation>
    <location>
        <position position="46"/>
    </location>
</feature>
<feature type="mutagenesis site" description="Protein is non-toxic and not AMPylated." evidence="2">
    <original>RNRLVHEY</original>
    <variation>ANRLVHEF</variation>
    <location>
        <begin position="102"/>
        <end position="109"/>
    </location>
</feature>
<feature type="mutagenesis site" description="Protein is no longer toxic, does not cleave tRNA, still AMPylated." evidence="2">
    <original>R</original>
    <variation>A</variation>
    <location>
        <position position="102"/>
    </location>
</feature>
<feature type="mutagenesis site" description="Protein is not AMPylated, is toxic, cleaves tRNA, not neutralized by MntA." evidence="2">
    <original>Y</original>
    <variation>F</variation>
    <location>
        <position position="109"/>
    </location>
</feature>
<feature type="helix" evidence="10">
    <location>
        <begin position="5"/>
        <end position="23"/>
    </location>
</feature>
<feature type="helix" evidence="10">
    <location>
        <begin position="24"/>
        <end position="26"/>
    </location>
</feature>
<feature type="helix" evidence="10">
    <location>
        <begin position="31"/>
        <end position="35"/>
    </location>
</feature>
<feature type="helix" evidence="10">
    <location>
        <begin position="38"/>
        <end position="66"/>
    </location>
</feature>
<feature type="strand" evidence="10">
    <location>
        <begin position="67"/>
        <end position="69"/>
    </location>
</feature>
<feature type="helix" evidence="10">
    <location>
        <begin position="74"/>
        <end position="83"/>
    </location>
</feature>
<feature type="helix" evidence="10">
    <location>
        <begin position="89"/>
        <end position="95"/>
    </location>
</feature>
<feature type="helix" evidence="10">
    <location>
        <begin position="98"/>
        <end position="105"/>
    </location>
</feature>
<feature type="strand" evidence="10">
    <location>
        <begin position="108"/>
        <end position="110"/>
    </location>
</feature>
<feature type="helix" evidence="10">
    <location>
        <begin position="114"/>
        <end position="147"/>
    </location>
</feature>
<proteinExistence type="evidence at protein level"/>
<keyword id="KW-0002">3D-structure</keyword>
<keyword id="KW-0255">Endonuclease</keyword>
<keyword id="KW-0378">Hydrolase</keyword>
<keyword id="KW-0540">Nuclease</keyword>
<keyword id="KW-0547">Nucleotide-binding</keyword>
<keyword id="KW-0597">Phosphoprotein</keyword>
<keyword id="KW-1277">Toxin-antitoxin system</keyword>